<organism>
    <name type="scientific">Thermosynechococcus vestitus (strain NIES-2133 / IAM M-273 / BP-1)</name>
    <dbReference type="NCBI Taxonomy" id="197221"/>
    <lineage>
        <taxon>Bacteria</taxon>
        <taxon>Bacillati</taxon>
        <taxon>Cyanobacteriota</taxon>
        <taxon>Cyanophyceae</taxon>
        <taxon>Acaryochloridales</taxon>
        <taxon>Thermosynechococcaceae</taxon>
        <taxon>Thermosynechococcus</taxon>
    </lineage>
</organism>
<proteinExistence type="inferred from homology"/>
<protein>
    <recommendedName>
        <fullName evidence="1">ATP-dependent Clp protease proteolytic subunit 2</fullName>
        <ecNumber evidence="1">3.4.21.92</ecNumber>
    </recommendedName>
    <alternativeName>
        <fullName evidence="1">Endopeptidase Clp 2</fullName>
    </alternativeName>
</protein>
<evidence type="ECO:0000255" key="1">
    <source>
        <dbReference type="HAMAP-Rule" id="MF_00444"/>
    </source>
</evidence>
<reference key="1">
    <citation type="journal article" date="2002" name="DNA Res.">
        <title>Complete genome structure of the thermophilic cyanobacterium Thermosynechococcus elongatus BP-1.</title>
        <authorList>
            <person name="Nakamura Y."/>
            <person name="Kaneko T."/>
            <person name="Sato S."/>
            <person name="Ikeuchi M."/>
            <person name="Katoh H."/>
            <person name="Sasamoto S."/>
            <person name="Watanabe A."/>
            <person name="Iriguchi M."/>
            <person name="Kawashima K."/>
            <person name="Kimura T."/>
            <person name="Kishida Y."/>
            <person name="Kiyokawa C."/>
            <person name="Kohara M."/>
            <person name="Matsumoto M."/>
            <person name="Matsuno A."/>
            <person name="Nakazaki N."/>
            <person name="Shimpo S."/>
            <person name="Sugimoto M."/>
            <person name="Takeuchi C."/>
            <person name="Yamada M."/>
            <person name="Tabata S."/>
        </authorList>
    </citation>
    <scope>NUCLEOTIDE SEQUENCE [LARGE SCALE GENOMIC DNA]</scope>
    <source>
        <strain>NIES-2133 / IAM M-273 / BP-1</strain>
    </source>
</reference>
<dbReference type="EC" id="3.4.21.92" evidence="1"/>
<dbReference type="EMBL" id="BA000039">
    <property type="protein sequence ID" value="BAC08624.1"/>
    <property type="molecule type" value="Genomic_DNA"/>
</dbReference>
<dbReference type="RefSeq" id="NP_681862.1">
    <property type="nucleotide sequence ID" value="NC_004113.1"/>
</dbReference>
<dbReference type="RefSeq" id="WP_011056914.1">
    <property type="nucleotide sequence ID" value="NC_004113.1"/>
</dbReference>
<dbReference type="SMR" id="Q8DJZ9"/>
<dbReference type="STRING" id="197221.gene:10747665"/>
<dbReference type="MEROPS" id="S14.001"/>
<dbReference type="EnsemblBacteria" id="BAC08624">
    <property type="protein sequence ID" value="BAC08624"/>
    <property type="gene ID" value="BAC08624"/>
</dbReference>
<dbReference type="KEGG" id="tel:tlr1071"/>
<dbReference type="PATRIC" id="fig|197221.4.peg.1126"/>
<dbReference type="eggNOG" id="COG0740">
    <property type="taxonomic scope" value="Bacteria"/>
</dbReference>
<dbReference type="Proteomes" id="UP000000440">
    <property type="component" value="Chromosome"/>
</dbReference>
<dbReference type="GO" id="GO:0005737">
    <property type="term" value="C:cytoplasm"/>
    <property type="evidence" value="ECO:0007669"/>
    <property type="project" value="UniProtKB-SubCell"/>
</dbReference>
<dbReference type="GO" id="GO:0009368">
    <property type="term" value="C:endopeptidase Clp complex"/>
    <property type="evidence" value="ECO:0007669"/>
    <property type="project" value="TreeGrafter"/>
</dbReference>
<dbReference type="GO" id="GO:0004176">
    <property type="term" value="F:ATP-dependent peptidase activity"/>
    <property type="evidence" value="ECO:0007669"/>
    <property type="project" value="InterPro"/>
</dbReference>
<dbReference type="GO" id="GO:0051117">
    <property type="term" value="F:ATPase binding"/>
    <property type="evidence" value="ECO:0007669"/>
    <property type="project" value="TreeGrafter"/>
</dbReference>
<dbReference type="GO" id="GO:0004252">
    <property type="term" value="F:serine-type endopeptidase activity"/>
    <property type="evidence" value="ECO:0007669"/>
    <property type="project" value="UniProtKB-UniRule"/>
</dbReference>
<dbReference type="GO" id="GO:0006515">
    <property type="term" value="P:protein quality control for misfolded or incompletely synthesized proteins"/>
    <property type="evidence" value="ECO:0007669"/>
    <property type="project" value="TreeGrafter"/>
</dbReference>
<dbReference type="CDD" id="cd07017">
    <property type="entry name" value="S14_ClpP_2"/>
    <property type="match status" value="1"/>
</dbReference>
<dbReference type="FunFam" id="3.90.226.10:FF:000001">
    <property type="entry name" value="ATP-dependent Clp protease proteolytic subunit"/>
    <property type="match status" value="1"/>
</dbReference>
<dbReference type="Gene3D" id="3.90.226.10">
    <property type="entry name" value="2-enoyl-CoA Hydratase, Chain A, domain 1"/>
    <property type="match status" value="1"/>
</dbReference>
<dbReference type="HAMAP" id="MF_00444">
    <property type="entry name" value="ClpP"/>
    <property type="match status" value="1"/>
</dbReference>
<dbReference type="InterPro" id="IPR001907">
    <property type="entry name" value="ClpP"/>
</dbReference>
<dbReference type="InterPro" id="IPR029045">
    <property type="entry name" value="ClpP/crotonase-like_dom_sf"/>
</dbReference>
<dbReference type="InterPro" id="IPR023562">
    <property type="entry name" value="ClpP/TepA"/>
</dbReference>
<dbReference type="InterPro" id="IPR033135">
    <property type="entry name" value="ClpP_His_AS"/>
</dbReference>
<dbReference type="InterPro" id="IPR018215">
    <property type="entry name" value="ClpP_Ser_AS"/>
</dbReference>
<dbReference type="NCBIfam" id="NF001368">
    <property type="entry name" value="PRK00277.1"/>
    <property type="match status" value="1"/>
</dbReference>
<dbReference type="NCBIfam" id="NF009205">
    <property type="entry name" value="PRK12553.1"/>
    <property type="match status" value="1"/>
</dbReference>
<dbReference type="PANTHER" id="PTHR10381">
    <property type="entry name" value="ATP-DEPENDENT CLP PROTEASE PROTEOLYTIC SUBUNIT"/>
    <property type="match status" value="1"/>
</dbReference>
<dbReference type="PANTHER" id="PTHR10381:SF11">
    <property type="entry name" value="ATP-DEPENDENT CLP PROTEASE PROTEOLYTIC SUBUNIT, MITOCHONDRIAL"/>
    <property type="match status" value="1"/>
</dbReference>
<dbReference type="Pfam" id="PF00574">
    <property type="entry name" value="CLP_protease"/>
    <property type="match status" value="1"/>
</dbReference>
<dbReference type="PRINTS" id="PR00127">
    <property type="entry name" value="CLPPROTEASEP"/>
</dbReference>
<dbReference type="SUPFAM" id="SSF52096">
    <property type="entry name" value="ClpP/crotonase"/>
    <property type="match status" value="1"/>
</dbReference>
<dbReference type="PROSITE" id="PS00382">
    <property type="entry name" value="CLP_PROTEASE_HIS"/>
    <property type="match status" value="1"/>
</dbReference>
<dbReference type="PROSITE" id="PS00381">
    <property type="entry name" value="CLP_PROTEASE_SER"/>
    <property type="match status" value="1"/>
</dbReference>
<name>CLPP2_THEVB</name>
<feature type="chain" id="PRO_0000179682" description="ATP-dependent Clp protease proteolytic subunit 2">
    <location>
        <begin position="1"/>
        <end position="198"/>
    </location>
</feature>
<feature type="active site" description="Nucleophile" evidence="1">
    <location>
        <position position="101"/>
    </location>
</feature>
<feature type="active site" evidence="1">
    <location>
        <position position="126"/>
    </location>
</feature>
<comment type="function">
    <text evidence="1">Cleaves peptides in various proteins in a process that requires ATP hydrolysis. Has a chymotrypsin-like activity. Plays a major role in the degradation of misfolded proteins.</text>
</comment>
<comment type="catalytic activity">
    <reaction evidence="1">
        <text>Hydrolysis of proteins to small peptides in the presence of ATP and magnesium. alpha-casein is the usual test substrate. In the absence of ATP, only oligopeptides shorter than five residues are hydrolyzed (such as succinyl-Leu-Tyr-|-NHMec, and Leu-Tyr-Leu-|-Tyr-Trp, in which cleavage of the -Tyr-|-Leu- and -Tyr-|-Trp bonds also occurs).</text>
        <dbReference type="EC" id="3.4.21.92"/>
    </reaction>
</comment>
<comment type="subunit">
    <text evidence="1">Fourteen ClpP subunits assemble into 2 heptameric rings which stack back to back to give a disk-like structure with a central cavity, resembling the structure of eukaryotic proteasomes.</text>
</comment>
<comment type="subcellular location">
    <subcellularLocation>
        <location evidence="1">Cytoplasm</location>
    </subcellularLocation>
</comment>
<comment type="similarity">
    <text evidence="1">Belongs to the peptidase S14 family.</text>
</comment>
<accession>Q8DJZ9</accession>
<sequence length="198" mass="22363">MPIGVPKVPYRLPGEPYTQWIDIYNRLYRERIIFLGKEVDDEIANQIVAVMLYLDSEDPGKDIMLYINSPGGSVTAGMAIYDTMQHIKSDVVTICVGLAASMGSFLLAAGTKGKRLALPHSRIMIHQPSGGTRGQATDIEIEAREILRVRRQLNELYAYHTGQPLEKIERDMDRDFFMSAEEAKNYGLIDRVIEERSN</sequence>
<keyword id="KW-0963">Cytoplasm</keyword>
<keyword id="KW-0378">Hydrolase</keyword>
<keyword id="KW-0645">Protease</keyword>
<keyword id="KW-1185">Reference proteome</keyword>
<keyword id="KW-0720">Serine protease</keyword>
<gene>
    <name evidence="1" type="primary">clpP2</name>
    <name type="ordered locus">tlr1071</name>
</gene>